<keyword id="KW-0285">Flavoprotein</keyword>
<keyword id="KW-0288">FMN</keyword>
<keyword id="KW-0560">Oxidoreductase</keyword>
<keyword id="KW-0664">Pyridoxine biosynthesis</keyword>
<protein>
    <recommendedName>
        <fullName evidence="1">Pyridoxine/pyridoxamine 5'-phosphate oxidase</fullName>
        <ecNumber evidence="1">1.4.3.5</ecNumber>
    </recommendedName>
    <alternativeName>
        <fullName evidence="1">PNP/PMP oxidase</fullName>
        <shortName evidence="1">PNPOx</shortName>
    </alternativeName>
    <alternativeName>
        <fullName evidence="1">Pyridoxal 5'-phosphate synthase</fullName>
    </alternativeName>
</protein>
<proteinExistence type="inferred from homology"/>
<evidence type="ECO:0000255" key="1">
    <source>
        <dbReference type="HAMAP-Rule" id="MF_01629"/>
    </source>
</evidence>
<evidence type="ECO:0000305" key="2"/>
<organism>
    <name type="scientific">Yersinia pestis bv. Antiqua (strain Nepal516)</name>
    <dbReference type="NCBI Taxonomy" id="377628"/>
    <lineage>
        <taxon>Bacteria</taxon>
        <taxon>Pseudomonadati</taxon>
        <taxon>Pseudomonadota</taxon>
        <taxon>Gammaproteobacteria</taxon>
        <taxon>Enterobacterales</taxon>
        <taxon>Yersiniaceae</taxon>
        <taxon>Yersinia</taxon>
    </lineage>
</organism>
<comment type="function">
    <text evidence="1">Catalyzes the oxidation of either pyridoxine 5'-phosphate (PNP) or pyridoxamine 5'-phosphate (PMP) into pyridoxal 5'-phosphate (PLP).</text>
</comment>
<comment type="catalytic activity">
    <reaction evidence="1">
        <text>pyridoxamine 5'-phosphate + O2 + H2O = pyridoxal 5'-phosphate + H2O2 + NH4(+)</text>
        <dbReference type="Rhea" id="RHEA:15817"/>
        <dbReference type="ChEBI" id="CHEBI:15377"/>
        <dbReference type="ChEBI" id="CHEBI:15379"/>
        <dbReference type="ChEBI" id="CHEBI:16240"/>
        <dbReference type="ChEBI" id="CHEBI:28938"/>
        <dbReference type="ChEBI" id="CHEBI:58451"/>
        <dbReference type="ChEBI" id="CHEBI:597326"/>
        <dbReference type="EC" id="1.4.3.5"/>
    </reaction>
</comment>
<comment type="catalytic activity">
    <reaction evidence="1">
        <text>pyridoxine 5'-phosphate + O2 = pyridoxal 5'-phosphate + H2O2</text>
        <dbReference type="Rhea" id="RHEA:15149"/>
        <dbReference type="ChEBI" id="CHEBI:15379"/>
        <dbReference type="ChEBI" id="CHEBI:16240"/>
        <dbReference type="ChEBI" id="CHEBI:58589"/>
        <dbReference type="ChEBI" id="CHEBI:597326"/>
        <dbReference type="EC" id="1.4.3.5"/>
    </reaction>
</comment>
<comment type="cofactor">
    <cofactor evidence="1">
        <name>FMN</name>
        <dbReference type="ChEBI" id="CHEBI:58210"/>
    </cofactor>
    <text evidence="1">Binds 1 FMN per subunit.</text>
</comment>
<comment type="pathway">
    <text evidence="1">Cofactor metabolism; pyridoxal 5'-phosphate salvage; pyridoxal 5'-phosphate from pyridoxamine 5'-phosphate: step 1/1.</text>
</comment>
<comment type="pathway">
    <text evidence="1">Cofactor metabolism; pyridoxal 5'-phosphate salvage; pyridoxal 5'-phosphate from pyridoxine 5'-phosphate: step 1/1.</text>
</comment>
<comment type="subunit">
    <text evidence="1">Homodimer.</text>
</comment>
<comment type="similarity">
    <text evidence="1">Belongs to the pyridoxamine 5'-phosphate oxidase family.</text>
</comment>
<comment type="sequence caution" evidence="2">
    <conflict type="erroneous initiation">
        <sequence resource="EMBL-CDS" id="ABG18156"/>
    </conflict>
</comment>
<accession>Q1CIM4</accession>
<accession>C4GTC8</accession>
<gene>
    <name evidence="1" type="primary">pdxH</name>
    <name type="ordered locus">YPN_1827</name>
    <name type="ORF">YP516_2029</name>
</gene>
<dbReference type="EC" id="1.4.3.5" evidence="1"/>
<dbReference type="EMBL" id="CP000305">
    <property type="protein sequence ID" value="ABG18156.1"/>
    <property type="status" value="ALT_INIT"/>
    <property type="molecule type" value="Genomic_DNA"/>
</dbReference>
<dbReference type="EMBL" id="ACNQ01000010">
    <property type="protein sequence ID" value="EEO76729.1"/>
    <property type="molecule type" value="Genomic_DNA"/>
</dbReference>
<dbReference type="RefSeq" id="WP_002210959.1">
    <property type="nucleotide sequence ID" value="NZ_ACNQ01000010.1"/>
</dbReference>
<dbReference type="SMR" id="Q1CIM4"/>
<dbReference type="GeneID" id="57976305"/>
<dbReference type="KEGG" id="ypn:YPN_1827"/>
<dbReference type="HOGENOM" id="CLU_032263_2_2_6"/>
<dbReference type="UniPathway" id="UPA01068">
    <property type="reaction ID" value="UER00304"/>
</dbReference>
<dbReference type="UniPathway" id="UPA01068">
    <property type="reaction ID" value="UER00305"/>
</dbReference>
<dbReference type="Proteomes" id="UP000008936">
    <property type="component" value="Chromosome"/>
</dbReference>
<dbReference type="GO" id="GO:0010181">
    <property type="term" value="F:FMN binding"/>
    <property type="evidence" value="ECO:0007669"/>
    <property type="project" value="UniProtKB-UniRule"/>
</dbReference>
<dbReference type="GO" id="GO:0004733">
    <property type="term" value="F:pyridoxamine phosphate oxidase activity"/>
    <property type="evidence" value="ECO:0007669"/>
    <property type="project" value="UniProtKB-UniRule"/>
</dbReference>
<dbReference type="GO" id="GO:0008615">
    <property type="term" value="P:pyridoxine biosynthetic process"/>
    <property type="evidence" value="ECO:0007669"/>
    <property type="project" value="UniProtKB-KW"/>
</dbReference>
<dbReference type="FunFam" id="2.30.110.10:FF:000001">
    <property type="entry name" value="Pyridoxine/pyridoxamine 5'-phosphate oxidase"/>
    <property type="match status" value="1"/>
</dbReference>
<dbReference type="Gene3D" id="2.30.110.10">
    <property type="entry name" value="Electron Transport, Fmn-binding Protein, Chain A"/>
    <property type="match status" value="1"/>
</dbReference>
<dbReference type="HAMAP" id="MF_01629">
    <property type="entry name" value="PdxH"/>
    <property type="match status" value="1"/>
</dbReference>
<dbReference type="InterPro" id="IPR000659">
    <property type="entry name" value="Pyridox_Oxase"/>
</dbReference>
<dbReference type="InterPro" id="IPR019740">
    <property type="entry name" value="Pyridox_Oxase_CS"/>
</dbReference>
<dbReference type="InterPro" id="IPR011576">
    <property type="entry name" value="Pyridox_Oxase_N"/>
</dbReference>
<dbReference type="InterPro" id="IPR019576">
    <property type="entry name" value="Pyridoxamine_oxidase_dimer_C"/>
</dbReference>
<dbReference type="InterPro" id="IPR012349">
    <property type="entry name" value="Split_barrel_FMN-bd"/>
</dbReference>
<dbReference type="NCBIfam" id="TIGR00558">
    <property type="entry name" value="pdxH"/>
    <property type="match status" value="1"/>
</dbReference>
<dbReference type="NCBIfam" id="NF004231">
    <property type="entry name" value="PRK05679.1"/>
    <property type="match status" value="1"/>
</dbReference>
<dbReference type="PANTHER" id="PTHR10851:SF0">
    <property type="entry name" value="PYRIDOXINE-5'-PHOSPHATE OXIDASE"/>
    <property type="match status" value="1"/>
</dbReference>
<dbReference type="PANTHER" id="PTHR10851">
    <property type="entry name" value="PYRIDOXINE-5-PHOSPHATE OXIDASE"/>
    <property type="match status" value="1"/>
</dbReference>
<dbReference type="Pfam" id="PF10590">
    <property type="entry name" value="PNP_phzG_C"/>
    <property type="match status" value="1"/>
</dbReference>
<dbReference type="Pfam" id="PF01243">
    <property type="entry name" value="PNPOx_N"/>
    <property type="match status" value="1"/>
</dbReference>
<dbReference type="PIRSF" id="PIRSF000190">
    <property type="entry name" value="Pyd_amn-ph_oxd"/>
    <property type="match status" value="1"/>
</dbReference>
<dbReference type="SUPFAM" id="SSF50475">
    <property type="entry name" value="FMN-binding split barrel"/>
    <property type="match status" value="1"/>
</dbReference>
<dbReference type="PROSITE" id="PS01064">
    <property type="entry name" value="PYRIDOX_OXIDASE"/>
    <property type="match status" value="1"/>
</dbReference>
<sequence>MTENNEFDVADLRREYIRGGLRRSDLTENPLELFERWLKQACEARLPDPTAMCVATVDTNGQPYQRIVLLKHYDDQGLVFYTNLGSRKAQQLAENPHISLLFPWHMLDRQVIFLGKAERLSTLEVLKYFHSRPKDSQIGAWVSQQSSRISARGVLESKFLELKQKFQQGDVPLPSFWGGFRVKFDSVEFWQGGEHRLHDRFIYQREADAWKIDRLAP</sequence>
<feature type="chain" id="PRO_0000255898" description="Pyridoxine/pyridoxamine 5'-phosphate oxidase">
    <location>
        <begin position="1"/>
        <end position="217"/>
    </location>
</feature>
<feature type="binding site" evidence="1">
    <location>
        <begin position="13"/>
        <end position="16"/>
    </location>
    <ligand>
        <name>substrate</name>
    </ligand>
</feature>
<feature type="binding site" evidence="1">
    <location>
        <begin position="66"/>
        <end position="71"/>
    </location>
    <ligand>
        <name>FMN</name>
        <dbReference type="ChEBI" id="CHEBI:58210"/>
    </ligand>
</feature>
<feature type="binding site" evidence="1">
    <location>
        <position position="71"/>
    </location>
    <ligand>
        <name>substrate</name>
    </ligand>
</feature>
<feature type="binding site" evidence="1">
    <location>
        <begin position="81"/>
        <end position="82"/>
    </location>
    <ligand>
        <name>FMN</name>
        <dbReference type="ChEBI" id="CHEBI:58210"/>
    </ligand>
</feature>
<feature type="binding site" evidence="1">
    <location>
        <position position="87"/>
    </location>
    <ligand>
        <name>FMN</name>
        <dbReference type="ChEBI" id="CHEBI:58210"/>
    </ligand>
</feature>
<feature type="binding site" evidence="1">
    <location>
        <position position="88"/>
    </location>
    <ligand>
        <name>FMN</name>
        <dbReference type="ChEBI" id="CHEBI:58210"/>
    </ligand>
</feature>
<feature type="binding site" evidence="1">
    <location>
        <position position="110"/>
    </location>
    <ligand>
        <name>FMN</name>
        <dbReference type="ChEBI" id="CHEBI:58210"/>
    </ligand>
</feature>
<feature type="binding site" evidence="1">
    <location>
        <position position="128"/>
    </location>
    <ligand>
        <name>substrate</name>
    </ligand>
</feature>
<feature type="binding site" evidence="1">
    <location>
        <position position="132"/>
    </location>
    <ligand>
        <name>substrate</name>
    </ligand>
</feature>
<feature type="binding site" evidence="1">
    <location>
        <position position="136"/>
    </location>
    <ligand>
        <name>substrate</name>
    </ligand>
</feature>
<feature type="binding site" evidence="1">
    <location>
        <begin position="145"/>
        <end position="146"/>
    </location>
    <ligand>
        <name>FMN</name>
        <dbReference type="ChEBI" id="CHEBI:58210"/>
    </ligand>
</feature>
<feature type="binding site" evidence="1">
    <location>
        <position position="190"/>
    </location>
    <ligand>
        <name>FMN</name>
        <dbReference type="ChEBI" id="CHEBI:58210"/>
    </ligand>
</feature>
<feature type="binding site" evidence="1">
    <location>
        <begin position="196"/>
        <end position="198"/>
    </location>
    <ligand>
        <name>substrate</name>
    </ligand>
</feature>
<feature type="binding site" evidence="1">
    <location>
        <position position="200"/>
    </location>
    <ligand>
        <name>FMN</name>
        <dbReference type="ChEBI" id="CHEBI:58210"/>
    </ligand>
</feature>
<reference key="1">
    <citation type="journal article" date="2006" name="J. Bacteriol.">
        <title>Complete genome sequence of Yersinia pestis strains Antiqua and Nepal516: evidence of gene reduction in an emerging pathogen.</title>
        <authorList>
            <person name="Chain P.S.G."/>
            <person name="Hu P."/>
            <person name="Malfatti S.A."/>
            <person name="Radnedge L."/>
            <person name="Larimer F."/>
            <person name="Vergez L.M."/>
            <person name="Worsham P."/>
            <person name="Chu M.C."/>
            <person name="Andersen G.L."/>
        </authorList>
    </citation>
    <scope>NUCLEOTIDE SEQUENCE [LARGE SCALE GENOMIC DNA]</scope>
    <source>
        <strain>Nepal516</strain>
    </source>
</reference>
<reference key="2">
    <citation type="submission" date="2009-04" db="EMBL/GenBank/DDBJ databases">
        <title>Yersinia pestis Nepal516A whole genome shotgun sequencing project.</title>
        <authorList>
            <person name="Plunkett G. III"/>
            <person name="Anderson B.D."/>
            <person name="Baumler D.J."/>
            <person name="Burland V."/>
            <person name="Cabot E.L."/>
            <person name="Glasner J.D."/>
            <person name="Mau B."/>
            <person name="Neeno-Eckwall E."/>
            <person name="Perna N.T."/>
            <person name="Munk A.C."/>
            <person name="Tapia R."/>
            <person name="Green L.D."/>
            <person name="Rogers Y.C."/>
            <person name="Detter J.C."/>
            <person name="Bruce D.C."/>
            <person name="Brettin T.S."/>
        </authorList>
    </citation>
    <scope>NUCLEOTIDE SEQUENCE [LARGE SCALE GENOMIC DNA]</scope>
    <source>
        <strain>Nepal516</strain>
    </source>
</reference>
<name>PDXH_YERPN</name>